<name>G6PI_VIBC1</name>
<gene>
    <name evidence="1" type="primary">pgi</name>
    <name type="ordered locus">VIBHAR_00012</name>
</gene>
<organism>
    <name type="scientific">Vibrio campbellii (strain ATCC BAA-1116)</name>
    <dbReference type="NCBI Taxonomy" id="2902295"/>
    <lineage>
        <taxon>Bacteria</taxon>
        <taxon>Pseudomonadati</taxon>
        <taxon>Pseudomonadota</taxon>
        <taxon>Gammaproteobacteria</taxon>
        <taxon>Vibrionales</taxon>
        <taxon>Vibrionaceae</taxon>
        <taxon>Vibrio</taxon>
    </lineage>
</organism>
<sequence length="550" mass="60964">MLKNINPTQTQAWKALTAHFESAQDMDLKELFAQDAARFDKYSARFGSDILVDYSKNLINEETLKHLFALANETELKSAIEAMFSGEAINKTEDRAVLHTALRNRSNTPVMVGGEDVMPAVNAVLEKIKSFTERVIGGEWKGYTGKAITDIVNIGIGGSDLGPYMVTEALAPYKNHLNLHFVSNVDGTHIVETLKKVDPETTLFLIASKTFTTQETMTNAHSARDWFLATAGDQAHVAKHFAALSTNAPAVSEFGIDTDNMFEFWDWVGGRYSLWSAIGLSIALAVGYDNFIELLDGAHEMDNHFVSTDLESNIPVILALIGIWYNNFHGAESEAILPYDQYMHRFAAYFQQGNMESNGKYVDREGNAVTYQTGPIIWGEPGTNGQHAFYQLIHQGTKLIPCDFIAPAISHNPASDHHQKLMSNFFAQTEALAFGKSAETVKAEFAKAGKSEEEMASLVPFKVFEGNRPTNSILVKQITPRTLGNLIAMYEHKIFVQGVIWNIFSFDQWGVELGKQLANQILPELADESEINSHDSSTNGLINAFKAFKA</sequence>
<protein>
    <recommendedName>
        <fullName evidence="1">Glucose-6-phosphate isomerase</fullName>
        <shortName evidence="1">GPI</shortName>
        <ecNumber evidence="1">5.3.1.9</ecNumber>
    </recommendedName>
    <alternativeName>
        <fullName evidence="1">Phosphoglucose isomerase</fullName>
        <shortName evidence="1">PGI</shortName>
    </alternativeName>
    <alternativeName>
        <fullName evidence="1">Phosphohexose isomerase</fullName>
        <shortName evidence="1">PHI</shortName>
    </alternativeName>
</protein>
<accession>A7MSY9</accession>
<dbReference type="EC" id="5.3.1.9" evidence="1"/>
<dbReference type="EMBL" id="CP000789">
    <property type="protein sequence ID" value="ABU69072.1"/>
    <property type="molecule type" value="Genomic_DNA"/>
</dbReference>
<dbReference type="RefSeq" id="WP_011999039.1">
    <property type="nucleotide sequence ID" value="NC_009783.1"/>
</dbReference>
<dbReference type="SMR" id="A7MSY9"/>
<dbReference type="KEGG" id="vha:VIBHAR_00012"/>
<dbReference type="PATRIC" id="fig|338187.25.peg.2509"/>
<dbReference type="UniPathway" id="UPA00109">
    <property type="reaction ID" value="UER00181"/>
</dbReference>
<dbReference type="UniPathway" id="UPA00138"/>
<dbReference type="Proteomes" id="UP000008152">
    <property type="component" value="Chromosome I"/>
</dbReference>
<dbReference type="GO" id="GO:0005829">
    <property type="term" value="C:cytosol"/>
    <property type="evidence" value="ECO:0007669"/>
    <property type="project" value="TreeGrafter"/>
</dbReference>
<dbReference type="GO" id="GO:0097367">
    <property type="term" value="F:carbohydrate derivative binding"/>
    <property type="evidence" value="ECO:0007669"/>
    <property type="project" value="InterPro"/>
</dbReference>
<dbReference type="GO" id="GO:0004347">
    <property type="term" value="F:glucose-6-phosphate isomerase activity"/>
    <property type="evidence" value="ECO:0007669"/>
    <property type="project" value="UniProtKB-UniRule"/>
</dbReference>
<dbReference type="GO" id="GO:0048029">
    <property type="term" value="F:monosaccharide binding"/>
    <property type="evidence" value="ECO:0007669"/>
    <property type="project" value="TreeGrafter"/>
</dbReference>
<dbReference type="GO" id="GO:0006094">
    <property type="term" value="P:gluconeogenesis"/>
    <property type="evidence" value="ECO:0007669"/>
    <property type="project" value="UniProtKB-UniRule"/>
</dbReference>
<dbReference type="GO" id="GO:0051156">
    <property type="term" value="P:glucose 6-phosphate metabolic process"/>
    <property type="evidence" value="ECO:0007669"/>
    <property type="project" value="TreeGrafter"/>
</dbReference>
<dbReference type="GO" id="GO:0006096">
    <property type="term" value="P:glycolytic process"/>
    <property type="evidence" value="ECO:0007669"/>
    <property type="project" value="UniProtKB-UniRule"/>
</dbReference>
<dbReference type="CDD" id="cd05015">
    <property type="entry name" value="SIS_PGI_1"/>
    <property type="match status" value="1"/>
</dbReference>
<dbReference type="CDD" id="cd05016">
    <property type="entry name" value="SIS_PGI_2"/>
    <property type="match status" value="1"/>
</dbReference>
<dbReference type="FunFam" id="1.10.1390.10:FF:000001">
    <property type="entry name" value="Glucose-6-phosphate isomerase"/>
    <property type="match status" value="1"/>
</dbReference>
<dbReference type="FunFam" id="3.40.50.10490:FF:000004">
    <property type="entry name" value="Glucose-6-phosphate isomerase"/>
    <property type="match status" value="1"/>
</dbReference>
<dbReference type="Gene3D" id="1.10.1390.10">
    <property type="match status" value="1"/>
</dbReference>
<dbReference type="Gene3D" id="3.40.50.10490">
    <property type="entry name" value="Glucose-6-phosphate isomerase like protein, domain 1"/>
    <property type="match status" value="2"/>
</dbReference>
<dbReference type="HAMAP" id="MF_00473">
    <property type="entry name" value="G6P_isomerase"/>
    <property type="match status" value="1"/>
</dbReference>
<dbReference type="InterPro" id="IPR001672">
    <property type="entry name" value="G6P_Isomerase"/>
</dbReference>
<dbReference type="InterPro" id="IPR023096">
    <property type="entry name" value="G6P_Isomerase_C"/>
</dbReference>
<dbReference type="InterPro" id="IPR018189">
    <property type="entry name" value="Phosphoglucose_isomerase_CS"/>
</dbReference>
<dbReference type="InterPro" id="IPR046348">
    <property type="entry name" value="SIS_dom_sf"/>
</dbReference>
<dbReference type="InterPro" id="IPR035476">
    <property type="entry name" value="SIS_PGI_1"/>
</dbReference>
<dbReference type="InterPro" id="IPR035482">
    <property type="entry name" value="SIS_PGI_2"/>
</dbReference>
<dbReference type="NCBIfam" id="NF001211">
    <property type="entry name" value="PRK00179.1"/>
    <property type="match status" value="1"/>
</dbReference>
<dbReference type="PANTHER" id="PTHR11469">
    <property type="entry name" value="GLUCOSE-6-PHOSPHATE ISOMERASE"/>
    <property type="match status" value="1"/>
</dbReference>
<dbReference type="PANTHER" id="PTHR11469:SF1">
    <property type="entry name" value="GLUCOSE-6-PHOSPHATE ISOMERASE"/>
    <property type="match status" value="1"/>
</dbReference>
<dbReference type="Pfam" id="PF00342">
    <property type="entry name" value="PGI"/>
    <property type="match status" value="1"/>
</dbReference>
<dbReference type="PRINTS" id="PR00662">
    <property type="entry name" value="G6PISOMERASE"/>
</dbReference>
<dbReference type="SUPFAM" id="SSF53697">
    <property type="entry name" value="SIS domain"/>
    <property type="match status" value="1"/>
</dbReference>
<dbReference type="PROSITE" id="PS00765">
    <property type="entry name" value="P_GLUCOSE_ISOMERASE_1"/>
    <property type="match status" value="1"/>
</dbReference>
<dbReference type="PROSITE" id="PS00174">
    <property type="entry name" value="P_GLUCOSE_ISOMERASE_2"/>
    <property type="match status" value="1"/>
</dbReference>
<dbReference type="PROSITE" id="PS51463">
    <property type="entry name" value="P_GLUCOSE_ISOMERASE_3"/>
    <property type="match status" value="1"/>
</dbReference>
<evidence type="ECO:0000255" key="1">
    <source>
        <dbReference type="HAMAP-Rule" id="MF_00473"/>
    </source>
</evidence>
<reference key="1">
    <citation type="submission" date="2007-08" db="EMBL/GenBank/DDBJ databases">
        <authorList>
            <consortium name="The Vibrio harveyi Genome Sequencing Project"/>
            <person name="Bassler B."/>
            <person name="Clifton S.W."/>
            <person name="Fulton L."/>
            <person name="Delehaunty K."/>
            <person name="Fronick C."/>
            <person name="Harrison M."/>
            <person name="Markivic C."/>
            <person name="Fulton R."/>
            <person name="Tin-Wollam A.-M."/>
            <person name="Shah N."/>
            <person name="Pepin K."/>
            <person name="Nash W."/>
            <person name="Thiruvilangam P."/>
            <person name="Bhonagiri V."/>
            <person name="Waters C."/>
            <person name="Tu K.C."/>
            <person name="Irgon J."/>
            <person name="Wilson R.K."/>
        </authorList>
    </citation>
    <scope>NUCLEOTIDE SEQUENCE [LARGE SCALE GENOMIC DNA]</scope>
    <source>
        <strain>ATCC BAA-1116 / BB120</strain>
    </source>
</reference>
<comment type="function">
    <text evidence="1">Catalyzes the reversible isomerization of glucose-6-phosphate to fructose-6-phosphate.</text>
</comment>
<comment type="catalytic activity">
    <reaction evidence="1">
        <text>alpha-D-glucose 6-phosphate = beta-D-fructose 6-phosphate</text>
        <dbReference type="Rhea" id="RHEA:11816"/>
        <dbReference type="ChEBI" id="CHEBI:57634"/>
        <dbReference type="ChEBI" id="CHEBI:58225"/>
        <dbReference type="EC" id="5.3.1.9"/>
    </reaction>
</comment>
<comment type="pathway">
    <text evidence="1">Carbohydrate biosynthesis; gluconeogenesis.</text>
</comment>
<comment type="pathway">
    <text evidence="1">Carbohydrate degradation; glycolysis; D-glyceraldehyde 3-phosphate and glycerone phosphate from D-glucose: step 2/4.</text>
</comment>
<comment type="subcellular location">
    <subcellularLocation>
        <location evidence="1">Cytoplasm</location>
    </subcellularLocation>
</comment>
<comment type="similarity">
    <text evidence="1">Belongs to the GPI family.</text>
</comment>
<proteinExistence type="inferred from homology"/>
<feature type="chain" id="PRO_1000014030" description="Glucose-6-phosphate isomerase">
    <location>
        <begin position="1"/>
        <end position="550"/>
    </location>
</feature>
<feature type="active site" description="Proton donor" evidence="1">
    <location>
        <position position="356"/>
    </location>
</feature>
<feature type="active site" evidence="1">
    <location>
        <position position="387"/>
    </location>
</feature>
<feature type="active site" evidence="1">
    <location>
        <position position="515"/>
    </location>
</feature>
<keyword id="KW-0963">Cytoplasm</keyword>
<keyword id="KW-0312">Gluconeogenesis</keyword>
<keyword id="KW-0324">Glycolysis</keyword>
<keyword id="KW-0413">Isomerase</keyword>